<feature type="chain" id="PRO_0000381135" description="8-amino-7-oxononanoate synthase">
    <location>
        <begin position="1"/>
        <end position="383"/>
    </location>
</feature>
<feature type="binding site" evidence="1">
    <location>
        <position position="22"/>
    </location>
    <ligand>
        <name>substrate</name>
    </ligand>
</feature>
<feature type="binding site" evidence="1">
    <location>
        <begin position="109"/>
        <end position="110"/>
    </location>
    <ligand>
        <name>pyridoxal 5'-phosphate</name>
        <dbReference type="ChEBI" id="CHEBI:597326"/>
    </ligand>
</feature>
<feature type="binding site" evidence="1">
    <location>
        <position position="134"/>
    </location>
    <ligand>
        <name>substrate</name>
    </ligand>
</feature>
<feature type="binding site" evidence="1">
    <location>
        <position position="178"/>
    </location>
    <ligand>
        <name>pyridoxal 5'-phosphate</name>
        <dbReference type="ChEBI" id="CHEBI:597326"/>
    </ligand>
</feature>
<feature type="binding site" evidence="1">
    <location>
        <position position="206"/>
    </location>
    <ligand>
        <name>pyridoxal 5'-phosphate</name>
        <dbReference type="ChEBI" id="CHEBI:597326"/>
    </ligand>
</feature>
<feature type="binding site" evidence="1">
    <location>
        <position position="232"/>
    </location>
    <ligand>
        <name>pyridoxal 5'-phosphate</name>
        <dbReference type="ChEBI" id="CHEBI:597326"/>
    </ligand>
</feature>
<feature type="binding site" evidence="1">
    <location>
        <position position="348"/>
    </location>
    <ligand>
        <name>substrate</name>
    </ligand>
</feature>
<feature type="modified residue" description="N6-(pyridoxal phosphate)lysine" evidence="1">
    <location>
        <position position="235"/>
    </location>
</feature>
<name>BIOF_VIBC1</name>
<keyword id="KW-0093">Biotin biosynthesis</keyword>
<keyword id="KW-0663">Pyridoxal phosphate</keyword>
<keyword id="KW-0808">Transferase</keyword>
<proteinExistence type="inferred from homology"/>
<organism>
    <name type="scientific">Vibrio campbellii (strain ATCC BAA-1116)</name>
    <dbReference type="NCBI Taxonomy" id="2902295"/>
    <lineage>
        <taxon>Bacteria</taxon>
        <taxon>Pseudomonadati</taxon>
        <taxon>Pseudomonadota</taxon>
        <taxon>Gammaproteobacteria</taxon>
        <taxon>Vibrionales</taxon>
        <taxon>Vibrionaceae</taxon>
        <taxon>Vibrio</taxon>
    </lineage>
</organism>
<gene>
    <name evidence="1" type="primary">bioF</name>
    <name type="ordered locus">VIBHAR_01808</name>
</gene>
<comment type="function">
    <text evidence="1">Catalyzes the decarboxylative condensation of pimeloyl-[acyl-carrier protein] and L-alanine to produce 8-amino-7-oxononanoate (AON), [acyl-carrier protein], and carbon dioxide.</text>
</comment>
<comment type="catalytic activity">
    <reaction evidence="1">
        <text>6-carboxyhexanoyl-[ACP] + L-alanine + H(+) = (8S)-8-amino-7-oxononanoate + holo-[ACP] + CO2</text>
        <dbReference type="Rhea" id="RHEA:42288"/>
        <dbReference type="Rhea" id="RHEA-COMP:9685"/>
        <dbReference type="Rhea" id="RHEA-COMP:9955"/>
        <dbReference type="ChEBI" id="CHEBI:15378"/>
        <dbReference type="ChEBI" id="CHEBI:16526"/>
        <dbReference type="ChEBI" id="CHEBI:57972"/>
        <dbReference type="ChEBI" id="CHEBI:64479"/>
        <dbReference type="ChEBI" id="CHEBI:78846"/>
        <dbReference type="ChEBI" id="CHEBI:149468"/>
        <dbReference type="EC" id="2.3.1.47"/>
    </reaction>
</comment>
<comment type="cofactor">
    <cofactor evidence="1">
        <name>pyridoxal 5'-phosphate</name>
        <dbReference type="ChEBI" id="CHEBI:597326"/>
    </cofactor>
</comment>
<comment type="pathway">
    <text evidence="1">Cofactor biosynthesis; biotin biosynthesis.</text>
</comment>
<comment type="subunit">
    <text evidence="1">Homodimer.</text>
</comment>
<comment type="similarity">
    <text evidence="1">Belongs to the class-II pyridoxal-phosphate-dependent aminotransferase family. BioF subfamily.</text>
</comment>
<sequence length="383" mass="41355">MPAFKSRIESALADRKAQGLNRSINVVFSGNQSILECEGRRYINFSSNDYLGLANDQALVRAWQQGLSVYGSGSGASPMVTGFSAAHSNLEAALTEWLGYERAILFGSGFSANQALLLTLLEKSDVLIQDRLNHASLMEAGMLSPAKMKRFKHNDIAHLNSLLSSEDNHLVVTEGVFSMDGDCAPLADIAEVTSSHDAWFAVDDAHGIGVLGESGGGSCELAKVKPELLIVTFGKAFGMSGAAILCDHATGDFLTQFARHHVYSTAIPPAQAYALTHAVSMIQEQSWRREKLTELNEAYRDGLQDLDGFVETQTSIKPFMIGESELALQVASACRQNGIWVTAIRPPTVPKGTSRLRITLTANHTNEQIKTLSMALKQALGAL</sequence>
<evidence type="ECO:0000255" key="1">
    <source>
        <dbReference type="HAMAP-Rule" id="MF_01693"/>
    </source>
</evidence>
<reference key="1">
    <citation type="submission" date="2007-08" db="EMBL/GenBank/DDBJ databases">
        <authorList>
            <consortium name="The Vibrio harveyi Genome Sequencing Project"/>
            <person name="Bassler B."/>
            <person name="Clifton S.W."/>
            <person name="Fulton L."/>
            <person name="Delehaunty K."/>
            <person name="Fronick C."/>
            <person name="Harrison M."/>
            <person name="Markivic C."/>
            <person name="Fulton R."/>
            <person name="Tin-Wollam A.-M."/>
            <person name="Shah N."/>
            <person name="Pepin K."/>
            <person name="Nash W."/>
            <person name="Thiruvilangam P."/>
            <person name="Bhonagiri V."/>
            <person name="Waters C."/>
            <person name="Tu K.C."/>
            <person name="Irgon J."/>
            <person name="Wilson R.K."/>
        </authorList>
    </citation>
    <scope>NUCLEOTIDE SEQUENCE [LARGE SCALE GENOMIC DNA]</scope>
    <source>
        <strain>ATCC BAA-1116 / BB120</strain>
    </source>
</reference>
<protein>
    <recommendedName>
        <fullName evidence="1">8-amino-7-oxononanoate synthase</fullName>
        <shortName evidence="1">AONS</shortName>
        <ecNumber evidence="1">2.3.1.47</ecNumber>
    </recommendedName>
    <alternativeName>
        <fullName evidence="1">7-keto-8-amino-pelargonic acid synthase</fullName>
        <shortName evidence="1">7-KAP synthase</shortName>
        <shortName evidence="1">KAPA synthase</shortName>
    </alternativeName>
    <alternativeName>
        <fullName evidence="1">8-amino-7-ketopelargonate synthase</fullName>
    </alternativeName>
</protein>
<dbReference type="EC" id="2.3.1.47" evidence="1"/>
<dbReference type="EMBL" id="CP000789">
    <property type="protein sequence ID" value="ABU70777.1"/>
    <property type="molecule type" value="Genomic_DNA"/>
</dbReference>
<dbReference type="RefSeq" id="WP_012127611.1">
    <property type="nucleotide sequence ID" value="NC_009783.1"/>
</dbReference>
<dbReference type="SMR" id="A7MX30"/>
<dbReference type="KEGG" id="vha:VIBHAR_01808"/>
<dbReference type="PATRIC" id="fig|338187.25.peg.867"/>
<dbReference type="UniPathway" id="UPA00078"/>
<dbReference type="Proteomes" id="UP000008152">
    <property type="component" value="Chromosome I"/>
</dbReference>
<dbReference type="GO" id="GO:0008710">
    <property type="term" value="F:8-amino-7-oxononanoate synthase activity"/>
    <property type="evidence" value="ECO:0007669"/>
    <property type="project" value="UniProtKB-UniRule"/>
</dbReference>
<dbReference type="GO" id="GO:0030170">
    <property type="term" value="F:pyridoxal phosphate binding"/>
    <property type="evidence" value="ECO:0007669"/>
    <property type="project" value="UniProtKB-UniRule"/>
</dbReference>
<dbReference type="GO" id="GO:0009102">
    <property type="term" value="P:biotin biosynthetic process"/>
    <property type="evidence" value="ECO:0007669"/>
    <property type="project" value="UniProtKB-UniRule"/>
</dbReference>
<dbReference type="CDD" id="cd06454">
    <property type="entry name" value="KBL_like"/>
    <property type="match status" value="1"/>
</dbReference>
<dbReference type="Gene3D" id="3.90.1150.10">
    <property type="entry name" value="Aspartate Aminotransferase, domain 1"/>
    <property type="match status" value="1"/>
</dbReference>
<dbReference type="Gene3D" id="3.40.640.10">
    <property type="entry name" value="Type I PLP-dependent aspartate aminotransferase-like (Major domain)"/>
    <property type="match status" value="1"/>
</dbReference>
<dbReference type="HAMAP" id="MF_01693">
    <property type="entry name" value="BioF_aminotrans_2"/>
    <property type="match status" value="1"/>
</dbReference>
<dbReference type="InterPro" id="IPR001917">
    <property type="entry name" value="Aminotrans_II_pyridoxalP_BS"/>
</dbReference>
<dbReference type="InterPro" id="IPR004839">
    <property type="entry name" value="Aminotransferase_I/II_large"/>
</dbReference>
<dbReference type="InterPro" id="IPR050087">
    <property type="entry name" value="AON_synthase_class-II"/>
</dbReference>
<dbReference type="InterPro" id="IPR004723">
    <property type="entry name" value="AONS_Archaea/Proteobacteria"/>
</dbReference>
<dbReference type="InterPro" id="IPR022834">
    <property type="entry name" value="AONS_Proteobacteria"/>
</dbReference>
<dbReference type="InterPro" id="IPR015424">
    <property type="entry name" value="PyrdxlP-dep_Trfase"/>
</dbReference>
<dbReference type="InterPro" id="IPR015421">
    <property type="entry name" value="PyrdxlP-dep_Trfase_major"/>
</dbReference>
<dbReference type="InterPro" id="IPR015422">
    <property type="entry name" value="PyrdxlP-dep_Trfase_small"/>
</dbReference>
<dbReference type="NCBIfam" id="TIGR00858">
    <property type="entry name" value="bioF"/>
    <property type="match status" value="1"/>
</dbReference>
<dbReference type="PANTHER" id="PTHR13693:SF100">
    <property type="entry name" value="8-AMINO-7-OXONONANOATE SYNTHASE"/>
    <property type="match status" value="1"/>
</dbReference>
<dbReference type="PANTHER" id="PTHR13693">
    <property type="entry name" value="CLASS II AMINOTRANSFERASE/8-AMINO-7-OXONONANOATE SYNTHASE"/>
    <property type="match status" value="1"/>
</dbReference>
<dbReference type="Pfam" id="PF00155">
    <property type="entry name" value="Aminotran_1_2"/>
    <property type="match status" value="1"/>
</dbReference>
<dbReference type="SUPFAM" id="SSF53383">
    <property type="entry name" value="PLP-dependent transferases"/>
    <property type="match status" value="1"/>
</dbReference>
<dbReference type="PROSITE" id="PS00599">
    <property type="entry name" value="AA_TRANSFER_CLASS_2"/>
    <property type="match status" value="1"/>
</dbReference>
<accession>A7MX30</accession>